<keyword id="KW-0012">Acyltransferase</keyword>
<keyword id="KW-0441">Lipid A biosynthesis</keyword>
<keyword id="KW-0444">Lipid biosynthesis</keyword>
<keyword id="KW-0443">Lipid metabolism</keyword>
<keyword id="KW-1185">Reference proteome</keyword>
<keyword id="KW-0677">Repeat</keyword>
<keyword id="KW-0808">Transferase</keyword>
<gene>
    <name evidence="1" type="primary">lpxD</name>
    <name type="ordered locus">RB10539</name>
</gene>
<organism>
    <name type="scientific">Rhodopirellula baltica (strain DSM 10527 / NCIMB 13988 / SH1)</name>
    <dbReference type="NCBI Taxonomy" id="243090"/>
    <lineage>
        <taxon>Bacteria</taxon>
        <taxon>Pseudomonadati</taxon>
        <taxon>Planctomycetota</taxon>
        <taxon>Planctomycetia</taxon>
        <taxon>Pirellulales</taxon>
        <taxon>Pirellulaceae</taxon>
        <taxon>Rhodopirellula</taxon>
    </lineage>
</organism>
<protein>
    <recommendedName>
        <fullName evidence="1">UDP-3-O-acylglucosamine N-acyltransferase</fullName>
        <ecNumber evidence="1">2.3.1.191</ecNumber>
    </recommendedName>
</protein>
<dbReference type="EC" id="2.3.1.191" evidence="1"/>
<dbReference type="EMBL" id="BX294151">
    <property type="protein sequence ID" value="CAD78933.1"/>
    <property type="status" value="ALT_INIT"/>
    <property type="molecule type" value="Genomic_DNA"/>
</dbReference>
<dbReference type="RefSeq" id="NP_869476.1">
    <property type="nucleotide sequence ID" value="NC_005027.1"/>
</dbReference>
<dbReference type="RefSeq" id="WP_164922341.1">
    <property type="nucleotide sequence ID" value="NC_005027.1"/>
</dbReference>
<dbReference type="SMR" id="Q7UEV1"/>
<dbReference type="STRING" id="243090.RB10539"/>
<dbReference type="EnsemblBacteria" id="CAD78933">
    <property type="protein sequence ID" value="CAD78933"/>
    <property type="gene ID" value="RB10539"/>
</dbReference>
<dbReference type="KEGG" id="rba:RB10539"/>
<dbReference type="PATRIC" id="fig|243090.15.peg.5092"/>
<dbReference type="eggNOG" id="COG1044">
    <property type="taxonomic scope" value="Bacteria"/>
</dbReference>
<dbReference type="HOGENOM" id="CLU_049865_0_0_0"/>
<dbReference type="InParanoid" id="Q7UEV1"/>
<dbReference type="OrthoDB" id="9784739at2"/>
<dbReference type="UniPathway" id="UPA00973"/>
<dbReference type="Proteomes" id="UP000001025">
    <property type="component" value="Chromosome"/>
</dbReference>
<dbReference type="GO" id="GO:0016020">
    <property type="term" value="C:membrane"/>
    <property type="evidence" value="ECO:0007669"/>
    <property type="project" value="GOC"/>
</dbReference>
<dbReference type="GO" id="GO:0016410">
    <property type="term" value="F:N-acyltransferase activity"/>
    <property type="evidence" value="ECO:0007669"/>
    <property type="project" value="InterPro"/>
</dbReference>
<dbReference type="GO" id="GO:0009245">
    <property type="term" value="P:lipid A biosynthetic process"/>
    <property type="evidence" value="ECO:0007669"/>
    <property type="project" value="UniProtKB-UniRule"/>
</dbReference>
<dbReference type="CDD" id="cd03352">
    <property type="entry name" value="LbH_LpxD"/>
    <property type="match status" value="1"/>
</dbReference>
<dbReference type="Gene3D" id="2.160.10.10">
    <property type="entry name" value="Hexapeptide repeat proteins"/>
    <property type="match status" value="1"/>
</dbReference>
<dbReference type="Gene3D" id="3.40.1390.10">
    <property type="entry name" value="MurE/MurF, N-terminal domain"/>
    <property type="match status" value="1"/>
</dbReference>
<dbReference type="HAMAP" id="MF_00523">
    <property type="entry name" value="LpxD"/>
    <property type="match status" value="1"/>
</dbReference>
<dbReference type="InterPro" id="IPR001451">
    <property type="entry name" value="Hexapep"/>
</dbReference>
<dbReference type="InterPro" id="IPR018357">
    <property type="entry name" value="Hexapep_transf_CS"/>
</dbReference>
<dbReference type="InterPro" id="IPR007691">
    <property type="entry name" value="LpxD"/>
</dbReference>
<dbReference type="InterPro" id="IPR011004">
    <property type="entry name" value="Trimer_LpxA-like_sf"/>
</dbReference>
<dbReference type="InterPro" id="IPR020573">
    <property type="entry name" value="UDP_GlcNAc_AcTrfase_non-rep"/>
</dbReference>
<dbReference type="NCBIfam" id="TIGR01853">
    <property type="entry name" value="lipid_A_lpxD"/>
    <property type="match status" value="1"/>
</dbReference>
<dbReference type="NCBIfam" id="NF002060">
    <property type="entry name" value="PRK00892.1"/>
    <property type="match status" value="1"/>
</dbReference>
<dbReference type="PANTHER" id="PTHR43378">
    <property type="entry name" value="UDP-3-O-ACYLGLUCOSAMINE N-ACYLTRANSFERASE"/>
    <property type="match status" value="1"/>
</dbReference>
<dbReference type="PANTHER" id="PTHR43378:SF2">
    <property type="entry name" value="UDP-3-O-ACYLGLUCOSAMINE N-ACYLTRANSFERASE 1, MITOCHONDRIAL-RELATED"/>
    <property type="match status" value="1"/>
</dbReference>
<dbReference type="Pfam" id="PF00132">
    <property type="entry name" value="Hexapep"/>
    <property type="match status" value="3"/>
</dbReference>
<dbReference type="Pfam" id="PF04613">
    <property type="entry name" value="LpxD"/>
    <property type="match status" value="1"/>
</dbReference>
<dbReference type="SUPFAM" id="SSF51161">
    <property type="entry name" value="Trimeric LpxA-like enzymes"/>
    <property type="match status" value="1"/>
</dbReference>
<dbReference type="PROSITE" id="PS00101">
    <property type="entry name" value="HEXAPEP_TRANSFERASES"/>
    <property type="match status" value="1"/>
</dbReference>
<sequence length="380" mass="39706">MASSNGLSLQEIADLVGGQLLDFSDCINDETNSSDGAVQGKSPSVEISSTICTGAAPPAEAGPQQITLIDQANHAGQLADSQAFAVIAPEYVAASPIRLQILVDDPHAAFTKLVSHYRPALGETMPVSGIDPTAKVDPTCQVHPSANIGANVEIGPGCTIAPGVNIGAGCQIGADCTLHPNVTLYAYCQLGERVTLHAGTVVGAHGFGYKMVDGRHIPTAQLGYVVIENDVEVGASSTIDRGTYGATRIGEGTKIDNQVMIAHNCQIGRHNLLCSQVGIAGSCTTGDYVVLAGQVGLKDHIALADGVIVGAQAGVMDDLAPNQVYLGSPATPQRDQMQIMAVQRKLPEMRRELKRLTQRIGRLSEALEEQSADIDQRKAA</sequence>
<proteinExistence type="inferred from homology"/>
<comment type="function">
    <text evidence="1">Catalyzes the N-acylation of UDP-3-O-acylglucosamine using 3-hydroxyacyl-ACP as the acyl donor. Is involved in the biosynthesis of lipid A, a phosphorylated glycolipid that anchors the lipopolysaccharide to the outer membrane of the cell.</text>
</comment>
<comment type="catalytic activity">
    <reaction evidence="1">
        <text>a UDP-3-O-[(3R)-3-hydroxyacyl]-alpha-D-glucosamine + a (3R)-hydroxyacyl-[ACP] = a UDP-2-N,3-O-bis[(3R)-3-hydroxyacyl]-alpha-D-glucosamine + holo-[ACP] + H(+)</text>
        <dbReference type="Rhea" id="RHEA:53836"/>
        <dbReference type="Rhea" id="RHEA-COMP:9685"/>
        <dbReference type="Rhea" id="RHEA-COMP:9945"/>
        <dbReference type="ChEBI" id="CHEBI:15378"/>
        <dbReference type="ChEBI" id="CHEBI:64479"/>
        <dbReference type="ChEBI" id="CHEBI:78827"/>
        <dbReference type="ChEBI" id="CHEBI:137740"/>
        <dbReference type="ChEBI" id="CHEBI:137748"/>
        <dbReference type="EC" id="2.3.1.191"/>
    </reaction>
</comment>
<comment type="pathway">
    <text evidence="1">Bacterial outer membrane biogenesis; LPS lipid A biosynthesis.</text>
</comment>
<comment type="subunit">
    <text evidence="1">Homotrimer.</text>
</comment>
<comment type="similarity">
    <text evidence="1">Belongs to the transferase hexapeptide repeat family. LpxD subfamily.</text>
</comment>
<comment type="sequence caution" evidence="2">
    <conflict type="erroneous initiation">
        <sequence resource="EMBL-CDS" id="CAD78933"/>
    </conflict>
</comment>
<feature type="chain" id="PRO_0000264424" description="UDP-3-O-acylglucosamine N-acyltransferase">
    <location>
        <begin position="1"/>
        <end position="380"/>
    </location>
</feature>
<feature type="active site" description="Proton acceptor" evidence="1">
    <location>
        <position position="263"/>
    </location>
</feature>
<name>LPXD_RHOBA</name>
<accession>Q7UEV1</accession>
<evidence type="ECO:0000255" key="1">
    <source>
        <dbReference type="HAMAP-Rule" id="MF_00523"/>
    </source>
</evidence>
<evidence type="ECO:0000305" key="2"/>
<reference key="1">
    <citation type="journal article" date="2003" name="Proc. Natl. Acad. Sci. U.S.A.">
        <title>Complete genome sequence of the marine planctomycete Pirellula sp. strain 1.</title>
        <authorList>
            <person name="Gloeckner F.O."/>
            <person name="Kube M."/>
            <person name="Bauer M."/>
            <person name="Teeling H."/>
            <person name="Lombardot T."/>
            <person name="Ludwig W."/>
            <person name="Gade D."/>
            <person name="Beck A."/>
            <person name="Borzym K."/>
            <person name="Heitmann K."/>
            <person name="Rabus R."/>
            <person name="Schlesner H."/>
            <person name="Amann R."/>
            <person name="Reinhardt R."/>
        </authorList>
    </citation>
    <scope>NUCLEOTIDE SEQUENCE [LARGE SCALE GENOMIC DNA]</scope>
    <source>
        <strain>DSM 10527 / NCIMB 13988 / SH1</strain>
    </source>
</reference>